<proteinExistence type="inferred from homology"/>
<gene>
    <name type="primary">GRXS8</name>
    <name type="synonym">ROXY15</name>
    <name type="ordered locus">At4g15660</name>
    <name type="ORF">dl3870w</name>
    <name type="ORF">FCAALL.353</name>
</gene>
<feature type="chain" id="PRO_0000268729" description="Monothiol glutaredoxin-S8">
    <location>
        <begin position="1"/>
        <end position="102"/>
    </location>
</feature>
<feature type="domain" description="Glutaredoxin" evidence="3">
    <location>
        <begin position="1"/>
        <end position="101"/>
    </location>
</feature>
<feature type="short sequence motif" description="Responsive for interaction with TGA factors" evidence="1">
    <location>
        <begin position="99"/>
        <end position="102"/>
    </location>
</feature>
<feature type="binding site" evidence="2">
    <location>
        <position position="21"/>
    </location>
    <ligand>
        <name>[2Fe-2S] cluster</name>
        <dbReference type="ChEBI" id="CHEBI:190135"/>
        <note>ligand shared between dimeric partners</note>
    </ligand>
</feature>
<keyword id="KW-0001">2Fe-2S</keyword>
<keyword id="KW-0963">Cytoplasm</keyword>
<keyword id="KW-0408">Iron</keyword>
<keyword id="KW-0411">Iron-sulfur</keyword>
<keyword id="KW-0479">Metal-binding</keyword>
<keyword id="KW-0539">Nucleus</keyword>
<keyword id="KW-0676">Redox-active center</keyword>
<keyword id="KW-1185">Reference proteome</keyword>
<protein>
    <recommendedName>
        <fullName>Monothiol glutaredoxin-S8</fullName>
        <shortName>AtGrxS8</shortName>
    </recommendedName>
    <alternativeName>
        <fullName>Protein ROXY 15</fullName>
    </alternativeName>
</protein>
<evidence type="ECO:0000250" key="1"/>
<evidence type="ECO:0000255" key="2"/>
<evidence type="ECO:0000255" key="3">
    <source>
        <dbReference type="PROSITE-ProRule" id="PRU00686"/>
    </source>
</evidence>
<evidence type="ECO:0000305" key="4"/>
<name>GRXS8_ARATH</name>
<comment type="function">
    <text evidence="4">May only reduce GSH-thiol disulfides, but not protein disulfides.</text>
</comment>
<comment type="subcellular location">
    <subcellularLocation>
        <location evidence="1">Cytoplasm</location>
    </subcellularLocation>
    <subcellularLocation>
        <location evidence="1">Nucleus</location>
    </subcellularLocation>
</comment>
<comment type="similarity">
    <text evidence="4">Belongs to the glutaredoxin family. CC-type subfamily.</text>
</comment>
<dbReference type="EMBL" id="FJ611915">
    <property type="protein sequence ID" value="ACO50420.1"/>
    <property type="molecule type" value="mRNA"/>
</dbReference>
<dbReference type="EMBL" id="Z97339">
    <property type="protein sequence ID" value="CAB10344.1"/>
    <property type="molecule type" value="Genomic_DNA"/>
</dbReference>
<dbReference type="EMBL" id="AL161542">
    <property type="protein sequence ID" value="CAB78608.1"/>
    <property type="molecule type" value="Genomic_DNA"/>
</dbReference>
<dbReference type="EMBL" id="CP002687">
    <property type="protein sequence ID" value="AEE83633.1"/>
    <property type="molecule type" value="Genomic_DNA"/>
</dbReference>
<dbReference type="EMBL" id="BT012516">
    <property type="protein sequence ID" value="AAS99660.1"/>
    <property type="molecule type" value="mRNA"/>
</dbReference>
<dbReference type="EMBL" id="BT015097">
    <property type="protein sequence ID" value="AAT71969.1"/>
    <property type="molecule type" value="mRNA"/>
</dbReference>
<dbReference type="PIR" id="F71421">
    <property type="entry name" value="F71421"/>
</dbReference>
<dbReference type="RefSeq" id="NP_193301.1">
    <property type="nucleotide sequence ID" value="NM_117657.3"/>
</dbReference>
<dbReference type="SMR" id="O23417"/>
<dbReference type="FunCoup" id="O23417">
    <property type="interactions" value="26"/>
</dbReference>
<dbReference type="STRING" id="3702.O23417"/>
<dbReference type="PaxDb" id="3702-AT4G15660.1"/>
<dbReference type="EnsemblPlants" id="AT4G15660.1">
    <property type="protein sequence ID" value="AT4G15660.1"/>
    <property type="gene ID" value="AT4G15660"/>
</dbReference>
<dbReference type="GeneID" id="827243"/>
<dbReference type="Gramene" id="AT4G15660.1">
    <property type="protein sequence ID" value="AT4G15660.1"/>
    <property type="gene ID" value="AT4G15660"/>
</dbReference>
<dbReference type="KEGG" id="ath:AT4G15660"/>
<dbReference type="Araport" id="AT4G15660"/>
<dbReference type="TAIR" id="AT4G15660">
    <property type="gene designation" value="GRXS8"/>
</dbReference>
<dbReference type="eggNOG" id="KOG1752">
    <property type="taxonomic scope" value="Eukaryota"/>
</dbReference>
<dbReference type="HOGENOM" id="CLU_026126_6_0_1"/>
<dbReference type="InParanoid" id="O23417"/>
<dbReference type="OMA" id="DINRGQE"/>
<dbReference type="PhylomeDB" id="O23417"/>
<dbReference type="PRO" id="PR:O23417"/>
<dbReference type="Proteomes" id="UP000006548">
    <property type="component" value="Chromosome 4"/>
</dbReference>
<dbReference type="ExpressionAtlas" id="O23417">
    <property type="expression patterns" value="baseline and differential"/>
</dbReference>
<dbReference type="GO" id="GO:0005829">
    <property type="term" value="C:cytosol"/>
    <property type="evidence" value="ECO:0000314"/>
    <property type="project" value="TAIR"/>
</dbReference>
<dbReference type="GO" id="GO:0005634">
    <property type="term" value="C:nucleus"/>
    <property type="evidence" value="ECO:0000314"/>
    <property type="project" value="TAIR"/>
</dbReference>
<dbReference type="GO" id="GO:0051537">
    <property type="term" value="F:2 iron, 2 sulfur cluster binding"/>
    <property type="evidence" value="ECO:0007669"/>
    <property type="project" value="UniProtKB-KW"/>
</dbReference>
<dbReference type="GO" id="GO:0046872">
    <property type="term" value="F:metal ion binding"/>
    <property type="evidence" value="ECO:0007669"/>
    <property type="project" value="UniProtKB-KW"/>
</dbReference>
<dbReference type="GO" id="GO:0010167">
    <property type="term" value="P:response to nitrate"/>
    <property type="evidence" value="ECO:0000270"/>
    <property type="project" value="TAIR"/>
</dbReference>
<dbReference type="CDD" id="cd03419">
    <property type="entry name" value="GRX_GRXh_1_2_like"/>
    <property type="match status" value="1"/>
</dbReference>
<dbReference type="FunFam" id="3.40.30.10:FF:000028">
    <property type="entry name" value="Glutaredoxin family protein"/>
    <property type="match status" value="1"/>
</dbReference>
<dbReference type="Gene3D" id="3.40.30.10">
    <property type="entry name" value="Glutaredoxin"/>
    <property type="match status" value="1"/>
</dbReference>
<dbReference type="InterPro" id="IPR011905">
    <property type="entry name" value="GlrX-like_pln_2"/>
</dbReference>
<dbReference type="InterPro" id="IPR002109">
    <property type="entry name" value="Glutaredoxin"/>
</dbReference>
<dbReference type="InterPro" id="IPR014025">
    <property type="entry name" value="Glutaredoxin_subgr"/>
</dbReference>
<dbReference type="InterPro" id="IPR036249">
    <property type="entry name" value="Thioredoxin-like_sf"/>
</dbReference>
<dbReference type="NCBIfam" id="TIGR02189">
    <property type="entry name" value="GlrX-like_plant"/>
    <property type="match status" value="1"/>
</dbReference>
<dbReference type="PANTHER" id="PTHR10168">
    <property type="entry name" value="GLUTAREDOXIN"/>
    <property type="match status" value="1"/>
</dbReference>
<dbReference type="Pfam" id="PF00462">
    <property type="entry name" value="Glutaredoxin"/>
    <property type="match status" value="1"/>
</dbReference>
<dbReference type="PRINTS" id="PR00160">
    <property type="entry name" value="GLUTAREDOXIN"/>
</dbReference>
<dbReference type="SUPFAM" id="SSF52833">
    <property type="entry name" value="Thioredoxin-like"/>
    <property type="match status" value="1"/>
</dbReference>
<dbReference type="PROSITE" id="PS51354">
    <property type="entry name" value="GLUTAREDOXIN_2"/>
    <property type="match status" value="1"/>
</dbReference>
<reference key="1">
    <citation type="journal article" date="2009" name="Plant Cell">
        <title>Nuclear activity of ROXY1, a glutaredoxin interacting with TGA factors, is required for petal development in Arabidopsis thaliana.</title>
        <authorList>
            <person name="Li S."/>
            <person name="Lauri A."/>
            <person name="Ziemann M."/>
            <person name="Busch A."/>
            <person name="Bhave M."/>
            <person name="Zachgo S."/>
        </authorList>
    </citation>
    <scope>NUCLEOTIDE SEQUENCE [MRNA]</scope>
    <scope>GENE FAMILY</scope>
</reference>
<reference key="2">
    <citation type="journal article" date="1998" name="Nature">
        <title>Analysis of 1.9 Mb of contiguous sequence from chromosome 4 of Arabidopsis thaliana.</title>
        <authorList>
            <person name="Bevan M."/>
            <person name="Bancroft I."/>
            <person name="Bent E."/>
            <person name="Love K."/>
            <person name="Goodman H.M."/>
            <person name="Dean C."/>
            <person name="Bergkamp R."/>
            <person name="Dirkse W."/>
            <person name="van Staveren M."/>
            <person name="Stiekema W."/>
            <person name="Drost L."/>
            <person name="Ridley P."/>
            <person name="Hudson S.-A."/>
            <person name="Patel K."/>
            <person name="Murphy G."/>
            <person name="Piffanelli P."/>
            <person name="Wedler H."/>
            <person name="Wedler E."/>
            <person name="Wambutt R."/>
            <person name="Weitzenegger T."/>
            <person name="Pohl T."/>
            <person name="Terryn N."/>
            <person name="Gielen J."/>
            <person name="Villarroel R."/>
            <person name="De Clercq R."/>
            <person name="van Montagu M."/>
            <person name="Lecharny A."/>
            <person name="Aubourg S."/>
            <person name="Gy I."/>
            <person name="Kreis M."/>
            <person name="Lao N."/>
            <person name="Kavanagh T."/>
            <person name="Hempel S."/>
            <person name="Kotter P."/>
            <person name="Entian K.-D."/>
            <person name="Rieger M."/>
            <person name="Schaefer M."/>
            <person name="Funk B."/>
            <person name="Mueller-Auer S."/>
            <person name="Silvey M."/>
            <person name="James R."/>
            <person name="Monfort A."/>
            <person name="Pons A."/>
            <person name="Puigdomenech P."/>
            <person name="Douka A."/>
            <person name="Voukelatou E."/>
            <person name="Milioni D."/>
            <person name="Hatzopoulos P."/>
            <person name="Piravandi E."/>
            <person name="Obermaier B."/>
            <person name="Hilbert H."/>
            <person name="Duesterhoeft A."/>
            <person name="Moores T."/>
            <person name="Jones J.D.G."/>
            <person name="Eneva T."/>
            <person name="Palme K."/>
            <person name="Benes V."/>
            <person name="Rechmann S."/>
            <person name="Ansorge W."/>
            <person name="Cooke R."/>
            <person name="Berger C."/>
            <person name="Delseny M."/>
            <person name="Voet M."/>
            <person name="Volckaert G."/>
            <person name="Mewes H.-W."/>
            <person name="Klosterman S."/>
            <person name="Schueller C."/>
            <person name="Chalwatzis N."/>
        </authorList>
    </citation>
    <scope>NUCLEOTIDE SEQUENCE [LARGE SCALE GENOMIC DNA]</scope>
    <source>
        <strain>cv. Columbia</strain>
    </source>
</reference>
<reference key="3">
    <citation type="journal article" date="1999" name="Nature">
        <title>Sequence and analysis of chromosome 4 of the plant Arabidopsis thaliana.</title>
        <authorList>
            <person name="Mayer K.F.X."/>
            <person name="Schueller C."/>
            <person name="Wambutt R."/>
            <person name="Murphy G."/>
            <person name="Volckaert G."/>
            <person name="Pohl T."/>
            <person name="Duesterhoeft A."/>
            <person name="Stiekema W."/>
            <person name="Entian K.-D."/>
            <person name="Terryn N."/>
            <person name="Harris B."/>
            <person name="Ansorge W."/>
            <person name="Brandt P."/>
            <person name="Grivell L.A."/>
            <person name="Rieger M."/>
            <person name="Weichselgartner M."/>
            <person name="de Simone V."/>
            <person name="Obermaier B."/>
            <person name="Mache R."/>
            <person name="Mueller M."/>
            <person name="Kreis M."/>
            <person name="Delseny M."/>
            <person name="Puigdomenech P."/>
            <person name="Watson M."/>
            <person name="Schmidtheini T."/>
            <person name="Reichert B."/>
            <person name="Portetelle D."/>
            <person name="Perez-Alonso M."/>
            <person name="Boutry M."/>
            <person name="Bancroft I."/>
            <person name="Vos P."/>
            <person name="Hoheisel J."/>
            <person name="Zimmermann W."/>
            <person name="Wedler H."/>
            <person name="Ridley P."/>
            <person name="Langham S.-A."/>
            <person name="McCullagh B."/>
            <person name="Bilham L."/>
            <person name="Robben J."/>
            <person name="van der Schueren J."/>
            <person name="Grymonprez B."/>
            <person name="Chuang Y.-J."/>
            <person name="Vandenbussche F."/>
            <person name="Braeken M."/>
            <person name="Weltjens I."/>
            <person name="Voet M."/>
            <person name="Bastiaens I."/>
            <person name="Aert R."/>
            <person name="Defoor E."/>
            <person name="Weitzenegger T."/>
            <person name="Bothe G."/>
            <person name="Ramsperger U."/>
            <person name="Hilbert H."/>
            <person name="Braun M."/>
            <person name="Holzer E."/>
            <person name="Brandt A."/>
            <person name="Peters S."/>
            <person name="van Staveren M."/>
            <person name="Dirkse W."/>
            <person name="Mooijman P."/>
            <person name="Klein Lankhorst R."/>
            <person name="Rose M."/>
            <person name="Hauf J."/>
            <person name="Koetter P."/>
            <person name="Berneiser S."/>
            <person name="Hempel S."/>
            <person name="Feldpausch M."/>
            <person name="Lamberth S."/>
            <person name="Van den Daele H."/>
            <person name="De Keyser A."/>
            <person name="Buysshaert C."/>
            <person name="Gielen J."/>
            <person name="Villarroel R."/>
            <person name="De Clercq R."/>
            <person name="van Montagu M."/>
            <person name="Rogers J."/>
            <person name="Cronin A."/>
            <person name="Quail M.A."/>
            <person name="Bray-Allen S."/>
            <person name="Clark L."/>
            <person name="Doggett J."/>
            <person name="Hall S."/>
            <person name="Kay M."/>
            <person name="Lennard N."/>
            <person name="McLay K."/>
            <person name="Mayes R."/>
            <person name="Pettett A."/>
            <person name="Rajandream M.A."/>
            <person name="Lyne M."/>
            <person name="Benes V."/>
            <person name="Rechmann S."/>
            <person name="Borkova D."/>
            <person name="Bloecker H."/>
            <person name="Scharfe M."/>
            <person name="Grimm M."/>
            <person name="Loehnert T.-H."/>
            <person name="Dose S."/>
            <person name="de Haan M."/>
            <person name="Maarse A.C."/>
            <person name="Schaefer M."/>
            <person name="Mueller-Auer S."/>
            <person name="Gabel C."/>
            <person name="Fuchs M."/>
            <person name="Fartmann B."/>
            <person name="Granderath K."/>
            <person name="Dauner D."/>
            <person name="Herzl A."/>
            <person name="Neumann S."/>
            <person name="Argiriou A."/>
            <person name="Vitale D."/>
            <person name="Liguori R."/>
            <person name="Piravandi E."/>
            <person name="Massenet O."/>
            <person name="Quigley F."/>
            <person name="Clabauld G."/>
            <person name="Muendlein A."/>
            <person name="Felber R."/>
            <person name="Schnabl S."/>
            <person name="Hiller R."/>
            <person name="Schmidt W."/>
            <person name="Lecharny A."/>
            <person name="Aubourg S."/>
            <person name="Chefdor F."/>
            <person name="Cooke R."/>
            <person name="Berger C."/>
            <person name="Monfort A."/>
            <person name="Casacuberta E."/>
            <person name="Gibbons T."/>
            <person name="Weber N."/>
            <person name="Vandenbol M."/>
            <person name="Bargues M."/>
            <person name="Terol J."/>
            <person name="Torres A."/>
            <person name="Perez-Perez A."/>
            <person name="Purnelle B."/>
            <person name="Bent E."/>
            <person name="Johnson S."/>
            <person name="Tacon D."/>
            <person name="Jesse T."/>
            <person name="Heijnen L."/>
            <person name="Schwarz S."/>
            <person name="Scholler P."/>
            <person name="Heber S."/>
            <person name="Francs P."/>
            <person name="Bielke C."/>
            <person name="Frishman D."/>
            <person name="Haase D."/>
            <person name="Lemcke K."/>
            <person name="Mewes H.-W."/>
            <person name="Stocker S."/>
            <person name="Zaccaria P."/>
            <person name="Bevan M."/>
            <person name="Wilson R.K."/>
            <person name="de la Bastide M."/>
            <person name="Habermann K."/>
            <person name="Parnell L."/>
            <person name="Dedhia N."/>
            <person name="Gnoj L."/>
            <person name="Schutz K."/>
            <person name="Huang E."/>
            <person name="Spiegel L."/>
            <person name="Sekhon M."/>
            <person name="Murray J."/>
            <person name="Sheet P."/>
            <person name="Cordes M."/>
            <person name="Abu-Threideh J."/>
            <person name="Stoneking T."/>
            <person name="Kalicki J."/>
            <person name="Graves T."/>
            <person name="Harmon G."/>
            <person name="Edwards J."/>
            <person name="Latreille P."/>
            <person name="Courtney L."/>
            <person name="Cloud J."/>
            <person name="Abbott A."/>
            <person name="Scott K."/>
            <person name="Johnson D."/>
            <person name="Minx P."/>
            <person name="Bentley D."/>
            <person name="Fulton B."/>
            <person name="Miller N."/>
            <person name="Greco T."/>
            <person name="Kemp K."/>
            <person name="Kramer J."/>
            <person name="Fulton L."/>
            <person name="Mardis E."/>
            <person name="Dante M."/>
            <person name="Pepin K."/>
            <person name="Hillier L.W."/>
            <person name="Nelson J."/>
            <person name="Spieth J."/>
            <person name="Ryan E."/>
            <person name="Andrews S."/>
            <person name="Geisel C."/>
            <person name="Layman D."/>
            <person name="Du H."/>
            <person name="Ali J."/>
            <person name="Berghoff A."/>
            <person name="Jones K."/>
            <person name="Drone K."/>
            <person name="Cotton M."/>
            <person name="Joshu C."/>
            <person name="Antonoiu B."/>
            <person name="Zidanic M."/>
            <person name="Strong C."/>
            <person name="Sun H."/>
            <person name="Lamar B."/>
            <person name="Yordan C."/>
            <person name="Ma P."/>
            <person name="Zhong J."/>
            <person name="Preston R."/>
            <person name="Vil D."/>
            <person name="Shekher M."/>
            <person name="Matero A."/>
            <person name="Shah R."/>
            <person name="Swaby I.K."/>
            <person name="O'Shaughnessy A."/>
            <person name="Rodriguez M."/>
            <person name="Hoffman J."/>
            <person name="Till S."/>
            <person name="Granat S."/>
            <person name="Shohdy N."/>
            <person name="Hasegawa A."/>
            <person name="Hameed A."/>
            <person name="Lodhi M."/>
            <person name="Johnson A."/>
            <person name="Chen E."/>
            <person name="Marra M.A."/>
            <person name="Martienssen R."/>
            <person name="McCombie W.R."/>
        </authorList>
    </citation>
    <scope>NUCLEOTIDE SEQUENCE [LARGE SCALE GENOMIC DNA]</scope>
    <source>
        <strain>cv. Columbia</strain>
    </source>
</reference>
<reference key="4">
    <citation type="journal article" date="2017" name="Plant J.">
        <title>Araport11: a complete reannotation of the Arabidopsis thaliana reference genome.</title>
        <authorList>
            <person name="Cheng C.Y."/>
            <person name="Krishnakumar V."/>
            <person name="Chan A.P."/>
            <person name="Thibaud-Nissen F."/>
            <person name="Schobel S."/>
            <person name="Town C.D."/>
        </authorList>
    </citation>
    <scope>GENOME REANNOTATION</scope>
    <source>
        <strain>cv. Columbia</strain>
    </source>
</reference>
<reference key="5">
    <citation type="submission" date="2004-07" db="EMBL/GenBank/DDBJ databases">
        <title>Arabidopsis ORF clones.</title>
        <authorList>
            <person name="Cheuk R.F."/>
            <person name="Chen H."/>
            <person name="Kim C.J."/>
            <person name="Shinn P."/>
            <person name="Ecker J.R."/>
        </authorList>
    </citation>
    <scope>NUCLEOTIDE SEQUENCE [LARGE SCALE MRNA]</scope>
    <source>
        <strain>cv. Columbia</strain>
    </source>
</reference>
<reference key="6">
    <citation type="journal article" date="2004" name="Cell. Mol. Life Sci.">
        <title>Plant glutaredoxins: still mysterious reducing systems.</title>
        <authorList>
            <person name="Rouhier N."/>
            <person name="Gelhaye E."/>
            <person name="Jacquot J.-P."/>
        </authorList>
    </citation>
    <scope>GENE FAMILY</scope>
    <scope>NOMENCLATURE</scope>
</reference>
<reference key="7">
    <citation type="journal article" date="2006" name="J. Exp. Bot.">
        <title>Genome-wide analysis of plant glutaredoxin systems.</title>
        <authorList>
            <person name="Rouhier N."/>
            <person name="Couturier J."/>
            <person name="Jacquot J.-P."/>
        </authorList>
    </citation>
    <scope>GENE FAMILY</scope>
</reference>
<sequence>MEKIQKMISEKSVVIFSNNSCCMSHTIKTLFLDLGVNPTIYELDEINRGKEIEYALAQLGCSPTVPVVFIGGQLVGGANQVMSLHLNRSLIPMLKRFGALWL</sequence>
<organism>
    <name type="scientific">Arabidopsis thaliana</name>
    <name type="common">Mouse-ear cress</name>
    <dbReference type="NCBI Taxonomy" id="3702"/>
    <lineage>
        <taxon>Eukaryota</taxon>
        <taxon>Viridiplantae</taxon>
        <taxon>Streptophyta</taxon>
        <taxon>Embryophyta</taxon>
        <taxon>Tracheophyta</taxon>
        <taxon>Spermatophyta</taxon>
        <taxon>Magnoliopsida</taxon>
        <taxon>eudicotyledons</taxon>
        <taxon>Gunneridae</taxon>
        <taxon>Pentapetalae</taxon>
        <taxon>rosids</taxon>
        <taxon>malvids</taxon>
        <taxon>Brassicales</taxon>
        <taxon>Brassicaceae</taxon>
        <taxon>Camelineae</taxon>
        <taxon>Arabidopsis</taxon>
    </lineage>
</organism>
<accession>O23417</accession>
<accession>C1JGQ6</accession>